<name>DEOB_SODGM</name>
<sequence length="407" mass="44156">MQRVFIMVLDSFGIGAAEDADKFGDRGSDTLGHIAERCERGDANHGRKGPLKLPNLTRLGLAKAAEQSTGRFPAGLDKQAEIVGAYAYASEISSGKDTLSGHWEIAGVPVLFDWGYFPAVENSFPPKLLEALVARAGLPGFLGNCHASGTVILDRLGEEHMRTGKPIFYTSADSVFQLACHEETFGLERLYSLCEIAREILTDGGYNIGRVITRPFVGAKAGQFERTGNRHDLAVPPPSATMLQKLVEEKGGTVVSVGKIADIYAQVGISKKVKATGLDALFDATVREMDAAGENTLVFTNFVDFDSAYGHRRDVAGYAAALELFDRRLPELMSRVQGNDILILTADHGCDPTWHGTDHTREHVPVLIYGPTVNPGFYGHRTTFADIGQTVARYFGLSPMDYGKAIM</sequence>
<protein>
    <recommendedName>
        <fullName evidence="1">Phosphopentomutase</fullName>
        <ecNumber evidence="1">5.4.2.7</ecNumber>
    </recommendedName>
    <alternativeName>
        <fullName evidence="1">Phosphodeoxyribomutase</fullName>
    </alternativeName>
</protein>
<evidence type="ECO:0000255" key="1">
    <source>
        <dbReference type="HAMAP-Rule" id="MF_00740"/>
    </source>
</evidence>
<feature type="chain" id="PRO_0000258306" description="Phosphopentomutase">
    <location>
        <begin position="1"/>
        <end position="407"/>
    </location>
</feature>
<feature type="binding site" evidence="1">
    <location>
        <position position="10"/>
    </location>
    <ligand>
        <name>Mn(2+)</name>
        <dbReference type="ChEBI" id="CHEBI:29035"/>
        <label>1</label>
    </ligand>
</feature>
<feature type="binding site" evidence="1">
    <location>
        <position position="306"/>
    </location>
    <ligand>
        <name>Mn(2+)</name>
        <dbReference type="ChEBI" id="CHEBI:29035"/>
        <label>2</label>
    </ligand>
</feature>
<feature type="binding site" evidence="1">
    <location>
        <position position="311"/>
    </location>
    <ligand>
        <name>Mn(2+)</name>
        <dbReference type="ChEBI" id="CHEBI:29035"/>
        <label>2</label>
    </ligand>
</feature>
<feature type="binding site" evidence="1">
    <location>
        <position position="347"/>
    </location>
    <ligand>
        <name>Mn(2+)</name>
        <dbReference type="ChEBI" id="CHEBI:29035"/>
        <label>1</label>
    </ligand>
</feature>
<feature type="binding site" evidence="1">
    <location>
        <position position="348"/>
    </location>
    <ligand>
        <name>Mn(2+)</name>
        <dbReference type="ChEBI" id="CHEBI:29035"/>
        <label>1</label>
    </ligand>
</feature>
<feature type="binding site" evidence="1">
    <location>
        <position position="359"/>
    </location>
    <ligand>
        <name>Mn(2+)</name>
        <dbReference type="ChEBI" id="CHEBI:29035"/>
        <label>2</label>
    </ligand>
</feature>
<proteinExistence type="inferred from homology"/>
<organism>
    <name type="scientific">Sodalis glossinidius (strain morsitans)</name>
    <dbReference type="NCBI Taxonomy" id="343509"/>
    <lineage>
        <taxon>Bacteria</taxon>
        <taxon>Pseudomonadati</taxon>
        <taxon>Pseudomonadota</taxon>
        <taxon>Gammaproteobacteria</taxon>
        <taxon>Enterobacterales</taxon>
        <taxon>Bruguierivoracaceae</taxon>
        <taxon>Sodalis</taxon>
    </lineage>
</organism>
<comment type="function">
    <text evidence="1">Isomerase that catalyzes the conversion of deoxy-ribose 1-phosphate (dRib-1-P) and ribose 1-phosphate (Rib-1-P) to deoxy-ribose 5-phosphate (dRib-5-P) and ribose 5-phosphate (Rib-5-P), respectively.</text>
</comment>
<comment type="catalytic activity">
    <reaction evidence="1">
        <text>2-deoxy-alpha-D-ribose 1-phosphate = 2-deoxy-D-ribose 5-phosphate</text>
        <dbReference type="Rhea" id="RHEA:27658"/>
        <dbReference type="ChEBI" id="CHEBI:57259"/>
        <dbReference type="ChEBI" id="CHEBI:62877"/>
        <dbReference type="EC" id="5.4.2.7"/>
    </reaction>
</comment>
<comment type="catalytic activity">
    <reaction evidence="1">
        <text>alpha-D-ribose 1-phosphate = D-ribose 5-phosphate</text>
        <dbReference type="Rhea" id="RHEA:18793"/>
        <dbReference type="ChEBI" id="CHEBI:57720"/>
        <dbReference type="ChEBI" id="CHEBI:78346"/>
        <dbReference type="EC" id="5.4.2.7"/>
    </reaction>
</comment>
<comment type="cofactor">
    <cofactor evidence="1">
        <name>Mn(2+)</name>
        <dbReference type="ChEBI" id="CHEBI:29035"/>
    </cofactor>
    <text evidence="1">Binds 2 manganese ions.</text>
</comment>
<comment type="pathway">
    <text evidence="1">Carbohydrate degradation; 2-deoxy-D-ribose 1-phosphate degradation; D-glyceraldehyde 3-phosphate and acetaldehyde from 2-deoxy-alpha-D-ribose 1-phosphate: step 1/2.</text>
</comment>
<comment type="subcellular location">
    <subcellularLocation>
        <location evidence="1">Cytoplasm</location>
    </subcellularLocation>
</comment>
<comment type="similarity">
    <text evidence="1">Belongs to the phosphopentomutase family.</text>
</comment>
<dbReference type="EC" id="5.4.2.7" evidence="1"/>
<dbReference type="EMBL" id="AP008232">
    <property type="protein sequence ID" value="BAE73671.1"/>
    <property type="molecule type" value="Genomic_DNA"/>
</dbReference>
<dbReference type="RefSeq" id="WP_011410259.1">
    <property type="nucleotide sequence ID" value="NC_007712.1"/>
</dbReference>
<dbReference type="SMR" id="Q2NW04"/>
<dbReference type="STRING" id="343509.SG0396"/>
<dbReference type="KEGG" id="sgl:SG0396"/>
<dbReference type="eggNOG" id="COG1015">
    <property type="taxonomic scope" value="Bacteria"/>
</dbReference>
<dbReference type="HOGENOM" id="CLU_053861_0_0_6"/>
<dbReference type="OrthoDB" id="9769930at2"/>
<dbReference type="BioCyc" id="SGLO343509:SGP1_RS03675-MONOMER"/>
<dbReference type="UniPathway" id="UPA00002">
    <property type="reaction ID" value="UER00467"/>
</dbReference>
<dbReference type="Proteomes" id="UP000001932">
    <property type="component" value="Chromosome"/>
</dbReference>
<dbReference type="GO" id="GO:0005829">
    <property type="term" value="C:cytosol"/>
    <property type="evidence" value="ECO:0007669"/>
    <property type="project" value="TreeGrafter"/>
</dbReference>
<dbReference type="GO" id="GO:0000287">
    <property type="term" value="F:magnesium ion binding"/>
    <property type="evidence" value="ECO:0007669"/>
    <property type="project" value="InterPro"/>
</dbReference>
<dbReference type="GO" id="GO:0030145">
    <property type="term" value="F:manganese ion binding"/>
    <property type="evidence" value="ECO:0007669"/>
    <property type="project" value="UniProtKB-UniRule"/>
</dbReference>
<dbReference type="GO" id="GO:0008973">
    <property type="term" value="F:phosphopentomutase activity"/>
    <property type="evidence" value="ECO:0007669"/>
    <property type="project" value="UniProtKB-UniRule"/>
</dbReference>
<dbReference type="GO" id="GO:0006018">
    <property type="term" value="P:2-deoxyribose 1-phosphate catabolic process"/>
    <property type="evidence" value="ECO:0007669"/>
    <property type="project" value="UniProtKB-UniRule"/>
</dbReference>
<dbReference type="GO" id="GO:0006015">
    <property type="term" value="P:5-phosphoribose 1-diphosphate biosynthetic process"/>
    <property type="evidence" value="ECO:0007669"/>
    <property type="project" value="UniProtKB-UniPathway"/>
</dbReference>
<dbReference type="GO" id="GO:0043094">
    <property type="term" value="P:metabolic compound salvage"/>
    <property type="evidence" value="ECO:0007669"/>
    <property type="project" value="InterPro"/>
</dbReference>
<dbReference type="GO" id="GO:0009117">
    <property type="term" value="P:nucleotide metabolic process"/>
    <property type="evidence" value="ECO:0007669"/>
    <property type="project" value="InterPro"/>
</dbReference>
<dbReference type="CDD" id="cd16009">
    <property type="entry name" value="PPM"/>
    <property type="match status" value="1"/>
</dbReference>
<dbReference type="FunFam" id="3.30.70.1250:FF:000001">
    <property type="entry name" value="Phosphopentomutase"/>
    <property type="match status" value="1"/>
</dbReference>
<dbReference type="Gene3D" id="3.40.720.10">
    <property type="entry name" value="Alkaline Phosphatase, subunit A"/>
    <property type="match status" value="1"/>
</dbReference>
<dbReference type="Gene3D" id="3.30.70.1250">
    <property type="entry name" value="Phosphopentomutase"/>
    <property type="match status" value="1"/>
</dbReference>
<dbReference type="HAMAP" id="MF_00740">
    <property type="entry name" value="Phosphopentomut"/>
    <property type="match status" value="1"/>
</dbReference>
<dbReference type="InterPro" id="IPR017850">
    <property type="entry name" value="Alkaline_phosphatase_core_sf"/>
</dbReference>
<dbReference type="InterPro" id="IPR010045">
    <property type="entry name" value="DeoB"/>
</dbReference>
<dbReference type="InterPro" id="IPR006124">
    <property type="entry name" value="Metalloenzyme"/>
</dbReference>
<dbReference type="InterPro" id="IPR024052">
    <property type="entry name" value="Phosphopentomutase_DeoB_cap_sf"/>
</dbReference>
<dbReference type="NCBIfam" id="TIGR01696">
    <property type="entry name" value="deoB"/>
    <property type="match status" value="1"/>
</dbReference>
<dbReference type="NCBIfam" id="NF003766">
    <property type="entry name" value="PRK05362.1"/>
    <property type="match status" value="1"/>
</dbReference>
<dbReference type="PANTHER" id="PTHR21110">
    <property type="entry name" value="PHOSPHOPENTOMUTASE"/>
    <property type="match status" value="1"/>
</dbReference>
<dbReference type="PANTHER" id="PTHR21110:SF0">
    <property type="entry name" value="PHOSPHOPENTOMUTASE"/>
    <property type="match status" value="1"/>
</dbReference>
<dbReference type="Pfam" id="PF01676">
    <property type="entry name" value="Metalloenzyme"/>
    <property type="match status" value="1"/>
</dbReference>
<dbReference type="PIRSF" id="PIRSF001491">
    <property type="entry name" value="Ppentomutase"/>
    <property type="match status" value="1"/>
</dbReference>
<dbReference type="SUPFAM" id="SSF53649">
    <property type="entry name" value="Alkaline phosphatase-like"/>
    <property type="match status" value="1"/>
</dbReference>
<dbReference type="SUPFAM" id="SSF143856">
    <property type="entry name" value="DeoB insert domain-like"/>
    <property type="match status" value="1"/>
</dbReference>
<gene>
    <name evidence="1" type="primary">deoB</name>
    <name type="ordered locus">SG0396</name>
</gene>
<accession>Q2NW04</accession>
<keyword id="KW-0963">Cytoplasm</keyword>
<keyword id="KW-0413">Isomerase</keyword>
<keyword id="KW-0464">Manganese</keyword>
<keyword id="KW-0479">Metal-binding</keyword>
<reference key="1">
    <citation type="journal article" date="2006" name="Genome Res.">
        <title>Massive genome erosion and functional adaptations provide insights into the symbiotic lifestyle of Sodalis glossinidius in the tsetse host.</title>
        <authorList>
            <person name="Toh H."/>
            <person name="Weiss B.L."/>
            <person name="Perkin S.A.H."/>
            <person name="Yamashita A."/>
            <person name="Oshima K."/>
            <person name="Hattori M."/>
            <person name="Aksoy S."/>
        </authorList>
    </citation>
    <scope>NUCLEOTIDE SEQUENCE [LARGE SCALE GENOMIC DNA]</scope>
    <source>
        <strain>morsitans</strain>
    </source>
</reference>